<proteinExistence type="inferred from homology"/>
<feature type="chain" id="PRO_0000374734" description="Ribosomal protein uS12 methylthiotransferase RimO">
    <location>
        <begin position="1"/>
        <end position="463"/>
    </location>
</feature>
<feature type="domain" description="MTTase N-terminal" evidence="1">
    <location>
        <begin position="15"/>
        <end position="130"/>
    </location>
</feature>
<feature type="domain" description="Radical SAM core" evidence="2">
    <location>
        <begin position="147"/>
        <end position="392"/>
    </location>
</feature>
<feature type="domain" description="TRAM" evidence="1">
    <location>
        <begin position="395"/>
        <end position="463"/>
    </location>
</feature>
<feature type="binding site" evidence="1">
    <location>
        <position position="24"/>
    </location>
    <ligand>
        <name>[4Fe-4S] cluster</name>
        <dbReference type="ChEBI" id="CHEBI:49883"/>
        <label>1</label>
    </ligand>
</feature>
<feature type="binding site" evidence="1">
    <location>
        <position position="60"/>
    </location>
    <ligand>
        <name>[4Fe-4S] cluster</name>
        <dbReference type="ChEBI" id="CHEBI:49883"/>
        <label>1</label>
    </ligand>
</feature>
<feature type="binding site" evidence="1">
    <location>
        <position position="89"/>
    </location>
    <ligand>
        <name>[4Fe-4S] cluster</name>
        <dbReference type="ChEBI" id="CHEBI:49883"/>
        <label>1</label>
    </ligand>
</feature>
<feature type="binding site" evidence="1">
    <location>
        <position position="161"/>
    </location>
    <ligand>
        <name>[4Fe-4S] cluster</name>
        <dbReference type="ChEBI" id="CHEBI:49883"/>
        <label>2</label>
        <note>4Fe-4S-S-AdoMet</note>
    </ligand>
</feature>
<feature type="binding site" evidence="1">
    <location>
        <position position="165"/>
    </location>
    <ligand>
        <name>[4Fe-4S] cluster</name>
        <dbReference type="ChEBI" id="CHEBI:49883"/>
        <label>2</label>
        <note>4Fe-4S-S-AdoMet</note>
    </ligand>
</feature>
<feature type="binding site" evidence="1">
    <location>
        <position position="168"/>
    </location>
    <ligand>
        <name>[4Fe-4S] cluster</name>
        <dbReference type="ChEBI" id="CHEBI:49883"/>
        <label>2</label>
        <note>4Fe-4S-S-AdoMet</note>
    </ligand>
</feature>
<keyword id="KW-0004">4Fe-4S</keyword>
<keyword id="KW-0963">Cytoplasm</keyword>
<keyword id="KW-0408">Iron</keyword>
<keyword id="KW-0411">Iron-sulfur</keyword>
<keyword id="KW-0479">Metal-binding</keyword>
<keyword id="KW-1185">Reference proteome</keyword>
<keyword id="KW-0949">S-adenosyl-L-methionine</keyword>
<keyword id="KW-0808">Transferase</keyword>
<organism>
    <name type="scientific">Burkholderia mallei (strain ATCC 23344)</name>
    <dbReference type="NCBI Taxonomy" id="243160"/>
    <lineage>
        <taxon>Bacteria</taxon>
        <taxon>Pseudomonadati</taxon>
        <taxon>Pseudomonadota</taxon>
        <taxon>Betaproteobacteria</taxon>
        <taxon>Burkholderiales</taxon>
        <taxon>Burkholderiaceae</taxon>
        <taxon>Burkholderia</taxon>
        <taxon>pseudomallei group</taxon>
    </lineage>
</organism>
<evidence type="ECO:0000255" key="1">
    <source>
        <dbReference type="HAMAP-Rule" id="MF_01865"/>
    </source>
</evidence>
<evidence type="ECO:0000255" key="2">
    <source>
        <dbReference type="PROSITE-ProRule" id="PRU01266"/>
    </source>
</evidence>
<protein>
    <recommendedName>
        <fullName evidence="1">Ribosomal protein uS12 methylthiotransferase RimO</fullName>
        <shortName evidence="1">uS12 MTTase</shortName>
        <shortName evidence="1">uS12 methylthiotransferase</shortName>
        <ecNumber evidence="1">2.8.4.4</ecNumber>
    </recommendedName>
    <alternativeName>
        <fullName evidence="1">Ribosomal protein uS12 (aspartate-C(3))-methylthiotransferase</fullName>
    </alternativeName>
    <alternativeName>
        <fullName evidence="1">Ribosome maturation factor RimO</fullName>
    </alternativeName>
</protein>
<sequence>MENSLKSSGKPLAAPKVGMVSLGCPKALVDSEQIITQLRAEGYEISGTYDGADLVVVNTCGFIDEAVQESLDAIGEALAENGKVIVTGCLGAKKSASGSGLIAEVHPKVLAVTGPHAVGEVMQAVHSHLPKPHDPFVDLVPAAGIKLTPRHYAYLKISEGCNHRCSFCIIPSMRGELVSRPVAEVMLEAENLFKSGVKELLVISQDTSAYGVDVKYRTGFWNGRPLKTRMTELVGALGELAAQYGAWVRLHYVYPYPHVDEIIPMMAQGPLKGHVLPYLDVPFQHAHPEVLKRMKRLANAERVLERVQKWREICPDLTIRSTFIAGFPGETDAQFETLLDFIREAELDRVGCFAYSPVEGASANALDGALPDDVREARRARFMEVAEEVSAARIARKIGKTLKVLIDEVNAEGGIGRTAADAPEIDGVVYVEPAAKASKRYKVGEFVSVKITGADGHDLWGEV</sequence>
<name>RIMO_BURMA</name>
<accession>Q62JZ1</accession>
<gene>
    <name evidence="1" type="primary">rimO</name>
    <name type="ordered locus">BMA1318</name>
</gene>
<dbReference type="EC" id="2.8.4.4" evidence="1"/>
<dbReference type="EMBL" id="CP000010">
    <property type="protein sequence ID" value="AAU47583.1"/>
    <property type="molecule type" value="Genomic_DNA"/>
</dbReference>
<dbReference type="RefSeq" id="WP_004193503.1">
    <property type="nucleotide sequence ID" value="NC_006348.1"/>
</dbReference>
<dbReference type="RefSeq" id="YP_102978.1">
    <property type="nucleotide sequence ID" value="NC_006348.1"/>
</dbReference>
<dbReference type="SMR" id="Q62JZ1"/>
<dbReference type="GeneID" id="92979051"/>
<dbReference type="KEGG" id="bma:BMA1318"/>
<dbReference type="PATRIC" id="fig|243160.12.peg.1355"/>
<dbReference type="eggNOG" id="COG0621">
    <property type="taxonomic scope" value="Bacteria"/>
</dbReference>
<dbReference type="HOGENOM" id="CLU_018697_0_0_4"/>
<dbReference type="Proteomes" id="UP000006693">
    <property type="component" value="Chromosome 1"/>
</dbReference>
<dbReference type="GO" id="GO:0005829">
    <property type="term" value="C:cytosol"/>
    <property type="evidence" value="ECO:0007669"/>
    <property type="project" value="TreeGrafter"/>
</dbReference>
<dbReference type="GO" id="GO:0051539">
    <property type="term" value="F:4 iron, 4 sulfur cluster binding"/>
    <property type="evidence" value="ECO:0007669"/>
    <property type="project" value="UniProtKB-UniRule"/>
</dbReference>
<dbReference type="GO" id="GO:0035599">
    <property type="term" value="F:aspartic acid methylthiotransferase activity"/>
    <property type="evidence" value="ECO:0007669"/>
    <property type="project" value="TreeGrafter"/>
</dbReference>
<dbReference type="GO" id="GO:0046872">
    <property type="term" value="F:metal ion binding"/>
    <property type="evidence" value="ECO:0007669"/>
    <property type="project" value="UniProtKB-KW"/>
</dbReference>
<dbReference type="GO" id="GO:0103039">
    <property type="term" value="F:protein methylthiotransferase activity"/>
    <property type="evidence" value="ECO:0007669"/>
    <property type="project" value="UniProtKB-EC"/>
</dbReference>
<dbReference type="GO" id="GO:0006400">
    <property type="term" value="P:tRNA modification"/>
    <property type="evidence" value="ECO:0007669"/>
    <property type="project" value="InterPro"/>
</dbReference>
<dbReference type="CDD" id="cd01335">
    <property type="entry name" value="Radical_SAM"/>
    <property type="match status" value="1"/>
</dbReference>
<dbReference type="FunFam" id="3.40.50.12160:FF:000002">
    <property type="entry name" value="Ribosomal protein S12 methylthiotransferase RimO"/>
    <property type="match status" value="1"/>
</dbReference>
<dbReference type="FunFam" id="3.80.30.20:FF:000001">
    <property type="entry name" value="tRNA-2-methylthio-N(6)-dimethylallyladenosine synthase 2"/>
    <property type="match status" value="1"/>
</dbReference>
<dbReference type="Gene3D" id="3.40.50.12160">
    <property type="entry name" value="Methylthiotransferase, N-terminal domain"/>
    <property type="match status" value="1"/>
</dbReference>
<dbReference type="Gene3D" id="2.40.50.140">
    <property type="entry name" value="Nucleic acid-binding proteins"/>
    <property type="match status" value="1"/>
</dbReference>
<dbReference type="Gene3D" id="3.80.30.20">
    <property type="entry name" value="tm_1862 like domain"/>
    <property type="match status" value="1"/>
</dbReference>
<dbReference type="HAMAP" id="MF_01865">
    <property type="entry name" value="MTTase_RimO"/>
    <property type="match status" value="1"/>
</dbReference>
<dbReference type="InterPro" id="IPR006638">
    <property type="entry name" value="Elp3/MiaA/NifB-like_rSAM"/>
</dbReference>
<dbReference type="InterPro" id="IPR005839">
    <property type="entry name" value="Methylthiotransferase"/>
</dbReference>
<dbReference type="InterPro" id="IPR020612">
    <property type="entry name" value="Methylthiotransferase_CS"/>
</dbReference>
<dbReference type="InterPro" id="IPR013848">
    <property type="entry name" value="Methylthiotransferase_N"/>
</dbReference>
<dbReference type="InterPro" id="IPR038135">
    <property type="entry name" value="Methylthiotransferase_N_sf"/>
</dbReference>
<dbReference type="InterPro" id="IPR012340">
    <property type="entry name" value="NA-bd_OB-fold"/>
</dbReference>
<dbReference type="InterPro" id="IPR005840">
    <property type="entry name" value="Ribosomal_uS12_MeSTrfase_RimO"/>
</dbReference>
<dbReference type="InterPro" id="IPR007197">
    <property type="entry name" value="rSAM"/>
</dbReference>
<dbReference type="InterPro" id="IPR023404">
    <property type="entry name" value="rSAM_horseshoe"/>
</dbReference>
<dbReference type="InterPro" id="IPR002792">
    <property type="entry name" value="TRAM_dom"/>
</dbReference>
<dbReference type="NCBIfam" id="TIGR01125">
    <property type="entry name" value="30S ribosomal protein S12 methylthiotransferase RimO"/>
    <property type="match status" value="1"/>
</dbReference>
<dbReference type="NCBIfam" id="TIGR00089">
    <property type="entry name" value="MiaB/RimO family radical SAM methylthiotransferase"/>
    <property type="match status" value="1"/>
</dbReference>
<dbReference type="PANTHER" id="PTHR43837">
    <property type="entry name" value="RIBOSOMAL PROTEIN S12 METHYLTHIOTRANSFERASE RIMO"/>
    <property type="match status" value="1"/>
</dbReference>
<dbReference type="PANTHER" id="PTHR43837:SF1">
    <property type="entry name" value="RIBOSOMAL PROTEIN US12 METHYLTHIOTRANSFERASE RIMO"/>
    <property type="match status" value="1"/>
</dbReference>
<dbReference type="Pfam" id="PF04055">
    <property type="entry name" value="Radical_SAM"/>
    <property type="match status" value="1"/>
</dbReference>
<dbReference type="Pfam" id="PF18693">
    <property type="entry name" value="TRAM_2"/>
    <property type="match status" value="1"/>
</dbReference>
<dbReference type="Pfam" id="PF00919">
    <property type="entry name" value="UPF0004"/>
    <property type="match status" value="1"/>
</dbReference>
<dbReference type="SFLD" id="SFLDG01082">
    <property type="entry name" value="B12-binding_domain_containing"/>
    <property type="match status" value="1"/>
</dbReference>
<dbReference type="SFLD" id="SFLDS00029">
    <property type="entry name" value="Radical_SAM"/>
    <property type="match status" value="1"/>
</dbReference>
<dbReference type="SFLD" id="SFLDF00274">
    <property type="entry name" value="ribosomal_protein_S12_methylth"/>
    <property type="match status" value="1"/>
</dbReference>
<dbReference type="SMART" id="SM00729">
    <property type="entry name" value="Elp3"/>
    <property type="match status" value="1"/>
</dbReference>
<dbReference type="SUPFAM" id="SSF102114">
    <property type="entry name" value="Radical SAM enzymes"/>
    <property type="match status" value="1"/>
</dbReference>
<dbReference type="PROSITE" id="PS51449">
    <property type="entry name" value="MTTASE_N"/>
    <property type="match status" value="1"/>
</dbReference>
<dbReference type="PROSITE" id="PS01278">
    <property type="entry name" value="MTTASE_RADICAL"/>
    <property type="match status" value="1"/>
</dbReference>
<dbReference type="PROSITE" id="PS51918">
    <property type="entry name" value="RADICAL_SAM"/>
    <property type="match status" value="1"/>
</dbReference>
<dbReference type="PROSITE" id="PS50926">
    <property type="entry name" value="TRAM"/>
    <property type="match status" value="1"/>
</dbReference>
<comment type="function">
    <text evidence="1">Catalyzes the methylthiolation of an aspartic acid residue of ribosomal protein uS12.</text>
</comment>
<comment type="catalytic activity">
    <reaction evidence="1">
        <text>L-aspartate(89)-[ribosomal protein uS12]-hydrogen + (sulfur carrier)-SH + AH2 + 2 S-adenosyl-L-methionine = 3-methylsulfanyl-L-aspartate(89)-[ribosomal protein uS12]-hydrogen + (sulfur carrier)-H + 5'-deoxyadenosine + L-methionine + A + S-adenosyl-L-homocysteine + 2 H(+)</text>
        <dbReference type="Rhea" id="RHEA:37087"/>
        <dbReference type="Rhea" id="RHEA-COMP:10460"/>
        <dbReference type="Rhea" id="RHEA-COMP:10461"/>
        <dbReference type="Rhea" id="RHEA-COMP:14737"/>
        <dbReference type="Rhea" id="RHEA-COMP:14739"/>
        <dbReference type="ChEBI" id="CHEBI:13193"/>
        <dbReference type="ChEBI" id="CHEBI:15378"/>
        <dbReference type="ChEBI" id="CHEBI:17319"/>
        <dbReference type="ChEBI" id="CHEBI:17499"/>
        <dbReference type="ChEBI" id="CHEBI:29917"/>
        <dbReference type="ChEBI" id="CHEBI:29961"/>
        <dbReference type="ChEBI" id="CHEBI:57844"/>
        <dbReference type="ChEBI" id="CHEBI:57856"/>
        <dbReference type="ChEBI" id="CHEBI:59789"/>
        <dbReference type="ChEBI" id="CHEBI:64428"/>
        <dbReference type="ChEBI" id="CHEBI:73599"/>
        <dbReference type="EC" id="2.8.4.4"/>
    </reaction>
</comment>
<comment type="cofactor">
    <cofactor evidence="1">
        <name>[4Fe-4S] cluster</name>
        <dbReference type="ChEBI" id="CHEBI:49883"/>
    </cofactor>
    <text evidence="1">Binds 2 [4Fe-4S] clusters. One cluster is coordinated with 3 cysteines and an exchangeable S-adenosyl-L-methionine.</text>
</comment>
<comment type="subcellular location">
    <subcellularLocation>
        <location evidence="1">Cytoplasm</location>
    </subcellularLocation>
</comment>
<comment type="similarity">
    <text evidence="1">Belongs to the methylthiotransferase family. RimO subfamily.</text>
</comment>
<reference key="1">
    <citation type="journal article" date="2004" name="Proc. Natl. Acad. Sci. U.S.A.">
        <title>Structural flexibility in the Burkholderia mallei genome.</title>
        <authorList>
            <person name="Nierman W.C."/>
            <person name="DeShazer D."/>
            <person name="Kim H.S."/>
            <person name="Tettelin H."/>
            <person name="Nelson K.E."/>
            <person name="Feldblyum T.V."/>
            <person name="Ulrich R.L."/>
            <person name="Ronning C.M."/>
            <person name="Brinkac L.M."/>
            <person name="Daugherty S.C."/>
            <person name="Davidsen T.D."/>
            <person name="DeBoy R.T."/>
            <person name="Dimitrov G."/>
            <person name="Dodson R.J."/>
            <person name="Durkin A.S."/>
            <person name="Gwinn M.L."/>
            <person name="Haft D.H."/>
            <person name="Khouri H.M."/>
            <person name="Kolonay J.F."/>
            <person name="Madupu R."/>
            <person name="Mohammoud Y."/>
            <person name="Nelson W.C."/>
            <person name="Radune D."/>
            <person name="Romero C.M."/>
            <person name="Sarria S."/>
            <person name="Selengut J."/>
            <person name="Shamblin C."/>
            <person name="Sullivan S.A."/>
            <person name="White O."/>
            <person name="Yu Y."/>
            <person name="Zafar N."/>
            <person name="Zhou L."/>
            <person name="Fraser C.M."/>
        </authorList>
    </citation>
    <scope>NUCLEOTIDE SEQUENCE [LARGE SCALE GENOMIC DNA]</scope>
    <source>
        <strain>ATCC 23344</strain>
    </source>
</reference>